<name>YH80A_YEAST</name>
<keyword id="KW-0472">Membrane</keyword>
<keyword id="KW-0812">Transmembrane</keyword>
<keyword id="KW-1133">Transmembrane helix</keyword>
<protein>
    <recommendedName>
        <fullName>Putative uncharacterized protein YHR180W-A</fullName>
    </recommendedName>
</protein>
<organism>
    <name type="scientific">Saccharomyces cerevisiae (strain ATCC 204508 / S288c)</name>
    <name type="common">Baker's yeast</name>
    <dbReference type="NCBI Taxonomy" id="559292"/>
    <lineage>
        <taxon>Eukaryota</taxon>
        <taxon>Fungi</taxon>
        <taxon>Dikarya</taxon>
        <taxon>Ascomycota</taxon>
        <taxon>Saccharomycotina</taxon>
        <taxon>Saccharomycetes</taxon>
        <taxon>Saccharomycetales</taxon>
        <taxon>Saccharomycetaceae</taxon>
        <taxon>Saccharomyces</taxon>
    </lineage>
</organism>
<gene>
    <name type="ordered locus">YHR180W-A</name>
    <name type="ORF">smORF288</name>
</gene>
<sequence length="60" mass="6820">MTYCHTDVSYFEIQHSCIFSLLSLVVERCTCNAKVASSILAGGIIPVLFFFPLFLFLYHL</sequence>
<accession>P0C5N8</accession>
<evidence type="ECO:0000255" key="1"/>
<evidence type="ECO:0000305" key="2"/>
<evidence type="ECO:0000305" key="3">
    <source>
    </source>
</evidence>
<reference key="1">
    <citation type="journal article" date="1994" name="Science">
        <title>Complete nucleotide sequence of Saccharomyces cerevisiae chromosome VIII.</title>
        <authorList>
            <person name="Johnston M."/>
            <person name="Andrews S."/>
            <person name="Brinkman R."/>
            <person name="Cooper J."/>
            <person name="Ding H."/>
            <person name="Dover J."/>
            <person name="Du Z."/>
            <person name="Favello A."/>
            <person name="Fulton L."/>
            <person name="Gattung S."/>
            <person name="Geisel C."/>
            <person name="Kirsten J."/>
            <person name="Kucaba T."/>
            <person name="Hillier L.W."/>
            <person name="Jier M."/>
            <person name="Johnston L."/>
            <person name="Langston Y."/>
            <person name="Latreille P."/>
            <person name="Louis E.J."/>
            <person name="Macri C."/>
            <person name="Mardis E."/>
            <person name="Menezes S."/>
            <person name="Mouser L."/>
            <person name="Nhan M."/>
            <person name="Rifkin L."/>
            <person name="Riles L."/>
            <person name="St Peter H."/>
            <person name="Trevaskis E."/>
            <person name="Vaughan K."/>
            <person name="Vignati D."/>
            <person name="Wilcox L."/>
            <person name="Wohldman P."/>
            <person name="Waterston R."/>
            <person name="Wilson R."/>
            <person name="Vaudin M."/>
        </authorList>
    </citation>
    <scope>NUCLEOTIDE SEQUENCE [LARGE SCALE GENOMIC DNA]</scope>
    <source>
        <strain>ATCC 204508 / S288c</strain>
    </source>
</reference>
<reference key="2">
    <citation type="journal article" date="2014" name="G3 (Bethesda)">
        <title>The reference genome sequence of Saccharomyces cerevisiae: Then and now.</title>
        <authorList>
            <person name="Engel S.R."/>
            <person name="Dietrich F.S."/>
            <person name="Fisk D.G."/>
            <person name="Binkley G."/>
            <person name="Balakrishnan R."/>
            <person name="Costanzo M.C."/>
            <person name="Dwight S.S."/>
            <person name="Hitz B.C."/>
            <person name="Karra K."/>
            <person name="Nash R.S."/>
            <person name="Weng S."/>
            <person name="Wong E.D."/>
            <person name="Lloyd P."/>
            <person name="Skrzypek M.S."/>
            <person name="Miyasato S.R."/>
            <person name="Simison M."/>
            <person name="Cherry J.M."/>
        </authorList>
    </citation>
    <scope>GENOME REANNOTATION</scope>
    <source>
        <strain>ATCC 204508 / S288c</strain>
    </source>
</reference>
<reference key="3">
    <citation type="journal article" date="2003" name="Genome Res.">
        <title>Systematic discovery of new genes in the Saccharomyces cerevisiae genome.</title>
        <authorList>
            <person name="Kessler M.M."/>
            <person name="Zeng Q."/>
            <person name="Hogan S."/>
            <person name="Cook R."/>
            <person name="Morales A.J."/>
            <person name="Cottarel G."/>
        </authorList>
    </citation>
    <scope>GENOME REANNOTATION</scope>
</reference>
<feature type="chain" id="PRO_0000309036" description="Putative uncharacterized protein YHR180W-A">
    <location>
        <begin position="1"/>
        <end position="60"/>
    </location>
</feature>
<feature type="transmembrane region" description="Helical" evidence="1">
    <location>
        <begin position="38"/>
        <end position="58"/>
    </location>
</feature>
<comment type="subcellular location">
    <subcellularLocation>
        <location evidence="2">Membrane</location>
        <topology evidence="2">Single-pass membrane protein</topology>
    </subcellularLocation>
</comment>
<comment type="miscellaneous">
    <text evidence="2">Partially overlaps YHR180C-B.</text>
</comment>
<comment type="caution">
    <text evidence="3">Product of a dubious gene prediction unlikely to encode a functional protein. Because of that it is not part of the S.cerevisiae S288c complete/reference proteome set.</text>
</comment>
<dbReference type="EMBL" id="U00028">
    <property type="status" value="NOT_ANNOTATED_CDS"/>
    <property type="molecule type" value="Genomic_DNA"/>
</dbReference>
<dbReference type="SMR" id="P0C5N8"/>
<dbReference type="STRING" id="4932.YHR180W-A"/>
<dbReference type="PaxDb" id="4932-YHR180W-A"/>
<dbReference type="EnsemblFungi" id="YHR180W-A_mRNA">
    <property type="protein sequence ID" value="YHR180W-A"/>
    <property type="gene ID" value="YHR180W-A"/>
</dbReference>
<dbReference type="AGR" id="SGD:S000028555"/>
<dbReference type="SGD" id="S000028555">
    <property type="gene designation" value="YHR180W-A"/>
</dbReference>
<dbReference type="HOGENOM" id="CLU_2943623_0_0_1"/>
<dbReference type="GO" id="GO:0016020">
    <property type="term" value="C:membrane"/>
    <property type="evidence" value="ECO:0007669"/>
    <property type="project" value="UniProtKB-SubCell"/>
</dbReference>
<proteinExistence type="uncertain"/>